<accession>A0A4Y5QZ62</accession>
<reference key="1">
    <citation type="journal article" date="2019" name="Plant Physiol.">
        <title>Gene networks underlying cannabinoid and terpenoid accumulation in cannabis.</title>
        <authorList>
            <person name="Zager J.J."/>
            <person name="Lange I."/>
            <person name="Srividya N."/>
            <person name="Smith A."/>
            <person name="Lange B.M."/>
        </authorList>
    </citation>
    <scope>NUCLEOTIDE SEQUENCE [MRNA]</scope>
    <scope>FUNCTION</scope>
    <scope>CATALYTIC ACTIVITY</scope>
    <scope>PATHWAY</scope>
    <scope>TISSUE SPECIFICITY</scope>
    <source>
        <strain>cv. Black Lime</strain>
        <strain>cv. Blackberry Kush</strain>
        <strain>cv. Canna Tsu</strain>
        <strain>cv. Cherry Chem</strain>
        <strain>cv. Mama Thai</strain>
        <strain>cv. Sour Diesel</strain>
        <strain>cv. Terple</strain>
        <strain>cv. Valley Fire</strain>
        <strain>cv. White Cookies</strain>
        <tissue>Trichome gland</tissue>
    </source>
</reference>
<feature type="chain" id="PRO_0000460909" description="(E)-nerolidol synthase TPS18VF">
    <location>
        <begin position="1"/>
        <end position="554"/>
    </location>
</feature>
<feature type="short sequence motif" description="DDXXD motif" evidence="2">
    <location>
        <begin position="313"/>
        <end position="317"/>
    </location>
</feature>
<feature type="binding site" evidence="2">
    <location>
        <position position="276"/>
    </location>
    <ligand>
        <name>(2E,6E)-farnesyl diphosphate</name>
        <dbReference type="ChEBI" id="CHEBI:175763"/>
    </ligand>
</feature>
<feature type="binding site" evidence="2">
    <location>
        <position position="313"/>
    </location>
    <ligand>
        <name>(2E,6E)-farnesyl diphosphate</name>
        <dbReference type="ChEBI" id="CHEBI:175763"/>
    </ligand>
</feature>
<feature type="binding site" evidence="2">
    <location>
        <position position="313"/>
    </location>
    <ligand>
        <name>Mg(2+)</name>
        <dbReference type="ChEBI" id="CHEBI:18420"/>
        <label>1</label>
    </ligand>
</feature>
<feature type="binding site" evidence="2">
    <location>
        <position position="313"/>
    </location>
    <ligand>
        <name>Mg(2+)</name>
        <dbReference type="ChEBI" id="CHEBI:18420"/>
        <label>2</label>
    </ligand>
</feature>
<feature type="binding site" evidence="2">
    <location>
        <position position="317"/>
    </location>
    <ligand>
        <name>(2E,6E)-farnesyl diphosphate</name>
        <dbReference type="ChEBI" id="CHEBI:175763"/>
    </ligand>
</feature>
<feature type="binding site" evidence="2">
    <location>
        <position position="317"/>
    </location>
    <ligand>
        <name>Mg(2+)</name>
        <dbReference type="ChEBI" id="CHEBI:18420"/>
        <label>1</label>
    </ligand>
</feature>
<feature type="binding site" evidence="2">
    <location>
        <position position="317"/>
    </location>
    <ligand>
        <name>Mg(2+)</name>
        <dbReference type="ChEBI" id="CHEBI:18420"/>
        <label>2</label>
    </ligand>
</feature>
<feature type="binding site" evidence="2">
    <location>
        <position position="455"/>
    </location>
    <ligand>
        <name>(2E,6E)-farnesyl diphosphate</name>
        <dbReference type="ChEBI" id="CHEBI:175763"/>
    </ligand>
</feature>
<feature type="binding site" evidence="2">
    <location>
        <position position="458"/>
    </location>
    <ligand>
        <name>(2E,6E)-farnesyl diphosphate</name>
        <dbReference type="ChEBI" id="CHEBI:175763"/>
    </ligand>
</feature>
<feature type="binding site" evidence="2">
    <location>
        <position position="458"/>
    </location>
    <ligand>
        <name>Mg(2+)</name>
        <dbReference type="ChEBI" id="CHEBI:18420"/>
        <label>3</label>
    </ligand>
</feature>
<feature type="binding site" evidence="2">
    <location>
        <position position="462"/>
    </location>
    <ligand>
        <name>Mg(2+)</name>
        <dbReference type="ChEBI" id="CHEBI:18420"/>
        <label>3</label>
    </ligand>
</feature>
<feature type="binding site" evidence="2">
    <location>
        <position position="466"/>
    </location>
    <ligand>
        <name>Mg(2+)</name>
        <dbReference type="ChEBI" id="CHEBI:18420"/>
        <label>3</label>
    </ligand>
</feature>
<gene>
    <name evidence="4" type="primary">TPS19BL</name>
</gene>
<organism>
    <name type="scientific">Cannabis sativa</name>
    <name type="common">Hemp</name>
    <name type="synonym">Marijuana</name>
    <dbReference type="NCBI Taxonomy" id="3483"/>
    <lineage>
        <taxon>Eukaryota</taxon>
        <taxon>Viridiplantae</taxon>
        <taxon>Streptophyta</taxon>
        <taxon>Embryophyta</taxon>
        <taxon>Tracheophyta</taxon>
        <taxon>Spermatophyta</taxon>
        <taxon>Magnoliopsida</taxon>
        <taxon>eudicotyledons</taxon>
        <taxon>Gunneridae</taxon>
        <taxon>Pentapetalae</taxon>
        <taxon>rosids</taxon>
        <taxon>fabids</taxon>
        <taxon>Rosales</taxon>
        <taxon>Cannabaceae</taxon>
        <taxon>Cannabis</taxon>
    </lineage>
</organism>
<protein>
    <recommendedName>
        <fullName evidence="4">(E)-nerolidol synthase TPS18VF</fullName>
        <ecNumber evidence="3">4.2.3.-</ecNumber>
    </recommendedName>
    <alternativeName>
        <fullName evidence="4">(R)linalool synthase TPS18VF</fullName>
        <shortName>(-)linalool synthase</shortName>
        <ecNumber evidence="3">4.2.3.26</ecNumber>
    </alternativeName>
    <alternativeName>
        <fullName evidence="4">(S)linalool synthase TPS18VF</fullName>
        <shortName>(+)linalool</shortName>
        <ecNumber evidence="3">4.2.3.25</ecNumber>
    </alternativeName>
    <alternativeName>
        <fullName evidence="4">Terpene synthase 19 BL</fullName>
        <shortName evidence="4">CsTPS19BL</shortName>
    </alternativeName>
</protein>
<evidence type="ECO:0000250" key="1">
    <source>
        <dbReference type="UniProtKB" id="A0A1C9J6A7"/>
    </source>
</evidence>
<evidence type="ECO:0000250" key="2">
    <source>
        <dbReference type="UniProtKB" id="Q40577"/>
    </source>
</evidence>
<evidence type="ECO:0000269" key="3">
    <source>
    </source>
</evidence>
<evidence type="ECO:0000303" key="4">
    <source>
    </source>
</evidence>
<evidence type="ECO:0000305" key="5"/>
<sequence length="554" mass="64384">MALSIMSSYASFRPFKPSSSLSSSQNIIRNFDENSKYHIRSNGDLTPQKDLDKYRDVLRKADPFDEGLKMIDAIQRLGIDYIFEEEIDKIIQSQSAYKFFREFEHDHHHHQDLYDVALRFRLLRQHGHFVPADIFNKYKDNNKGCFDTRLREDIKGLLSLYEASHLCIEGENILDEAALFSAQHLEASMTRLHRYDQYQAKYVATTLQNPTHKSLSKFTAKDLFGVYPSENGYINLFQQLAKVEFNRVQSLHRMEIDKVTRWWRDIGLAKELTFARDQPVKWYIWSMACLTDPILSKQRVALTKSISFIYVIDDIFDMYSSLDELILFTQAVSSWEYSAIEKLPDSMKTCFKALDNMINESSHTIYQKRGWSPLHSLRKTWASLCEAFLVEAKWFASRHVPKAKEYLENGVVSSGVHVVLVHIFVLLDETSLTQKTLDFVENMPSIITSTASILRLWDDFGSAKDENQEGHDGSYVECYMKELGGSVEDAREEMMEKISDAWKCLNKECILRNPAFPPPFLKASLNLARLVPLMYNYDHNQRLPHLEEHIKSLL</sequence>
<proteinExistence type="evidence at protein level"/>
<name>T19BL_CANSA</name>
<dbReference type="EC" id="4.2.3.-" evidence="3"/>
<dbReference type="EC" id="4.2.3.26" evidence="3"/>
<dbReference type="EC" id="4.2.3.25" evidence="3"/>
<dbReference type="EMBL" id="MK801763">
    <property type="protein sequence ID" value="QCY41291.1"/>
    <property type="molecule type" value="mRNA"/>
</dbReference>
<dbReference type="SMR" id="A0A4Y5QZ62"/>
<dbReference type="UniPathway" id="UPA00213"/>
<dbReference type="Proteomes" id="UP000596661">
    <property type="component" value="Unplaced"/>
</dbReference>
<dbReference type="GO" id="GO:0000287">
    <property type="term" value="F:magnesium ion binding"/>
    <property type="evidence" value="ECO:0007669"/>
    <property type="project" value="InterPro"/>
</dbReference>
<dbReference type="GO" id="GO:0010333">
    <property type="term" value="F:terpene synthase activity"/>
    <property type="evidence" value="ECO:0007669"/>
    <property type="project" value="InterPro"/>
</dbReference>
<dbReference type="GO" id="GO:0016102">
    <property type="term" value="P:diterpenoid biosynthetic process"/>
    <property type="evidence" value="ECO:0007669"/>
    <property type="project" value="InterPro"/>
</dbReference>
<dbReference type="CDD" id="cd00684">
    <property type="entry name" value="Terpene_cyclase_plant_C1"/>
    <property type="match status" value="1"/>
</dbReference>
<dbReference type="FunFam" id="1.10.600.10:FF:000007">
    <property type="entry name" value="Isoprene synthase, chloroplastic"/>
    <property type="match status" value="1"/>
</dbReference>
<dbReference type="Gene3D" id="1.10.600.10">
    <property type="entry name" value="Farnesyl Diphosphate Synthase"/>
    <property type="match status" value="1"/>
</dbReference>
<dbReference type="Gene3D" id="1.50.10.130">
    <property type="entry name" value="Terpene synthase, N-terminal domain"/>
    <property type="match status" value="1"/>
</dbReference>
<dbReference type="InterPro" id="IPR008949">
    <property type="entry name" value="Isoprenoid_synthase_dom_sf"/>
</dbReference>
<dbReference type="InterPro" id="IPR034741">
    <property type="entry name" value="Terpene_cyclase-like_1_C"/>
</dbReference>
<dbReference type="InterPro" id="IPR044814">
    <property type="entry name" value="Terpene_cyclase_plant_C1"/>
</dbReference>
<dbReference type="InterPro" id="IPR001906">
    <property type="entry name" value="Terpene_synth_N"/>
</dbReference>
<dbReference type="InterPro" id="IPR036965">
    <property type="entry name" value="Terpene_synth_N_sf"/>
</dbReference>
<dbReference type="InterPro" id="IPR050148">
    <property type="entry name" value="Terpene_synthase-like"/>
</dbReference>
<dbReference type="InterPro" id="IPR005630">
    <property type="entry name" value="Terpene_synthase_metal-bd"/>
</dbReference>
<dbReference type="InterPro" id="IPR008930">
    <property type="entry name" value="Terpenoid_cyclase/PrenylTrfase"/>
</dbReference>
<dbReference type="PANTHER" id="PTHR31225">
    <property type="entry name" value="OS04G0344100 PROTEIN-RELATED"/>
    <property type="match status" value="1"/>
</dbReference>
<dbReference type="PANTHER" id="PTHR31225:SF0">
    <property type="entry name" value="S-(+)-LINALOOL SYNTHASE, CHLOROPLASTIC"/>
    <property type="match status" value="1"/>
</dbReference>
<dbReference type="Pfam" id="PF01397">
    <property type="entry name" value="Terpene_synth"/>
    <property type="match status" value="1"/>
</dbReference>
<dbReference type="Pfam" id="PF03936">
    <property type="entry name" value="Terpene_synth_C"/>
    <property type="match status" value="1"/>
</dbReference>
<dbReference type="SFLD" id="SFLDS00005">
    <property type="entry name" value="Isoprenoid_Synthase_Type_I"/>
    <property type="match status" value="1"/>
</dbReference>
<dbReference type="SFLD" id="SFLDG01019">
    <property type="entry name" value="Terpene_Cyclase_Like_1_C_Termi"/>
    <property type="match status" value="1"/>
</dbReference>
<dbReference type="SUPFAM" id="SSF48239">
    <property type="entry name" value="Terpenoid cyclases/Protein prenyltransferases"/>
    <property type="match status" value="1"/>
</dbReference>
<dbReference type="SUPFAM" id="SSF48576">
    <property type="entry name" value="Terpenoid synthases"/>
    <property type="match status" value="1"/>
</dbReference>
<comment type="function">
    <text evidence="3">Involved in sesquiterpene olefins biosynthesis, constituants of cannabinoids and terpenoids-rich resins (PubMed:31138625). Catalyzes primarily the conversion of (2E)-farnesyl diphosphate to (E)-nerolidol, and the conversion of (2E)-geranyl diphosphate to (+)linalool and (-)linalool (PubMed:31138625).</text>
</comment>
<comment type="catalytic activity">
    <reaction evidence="3">
        <text>(2E,6E)-farnesyl diphosphate + H2O = (6E)-nerolidol + diphosphate</text>
        <dbReference type="Rhea" id="RHEA:56984"/>
        <dbReference type="ChEBI" id="CHEBI:15377"/>
        <dbReference type="ChEBI" id="CHEBI:33019"/>
        <dbReference type="ChEBI" id="CHEBI:141283"/>
        <dbReference type="ChEBI" id="CHEBI:175763"/>
    </reaction>
    <physiologicalReaction direction="left-to-right" evidence="3">
        <dbReference type="Rhea" id="RHEA:56985"/>
    </physiologicalReaction>
</comment>
<comment type="catalytic activity">
    <reaction evidence="3">
        <text>(2E)-geranyl diphosphate + H2O = (R)-linalool + diphosphate</text>
        <dbReference type="Rhea" id="RHEA:15809"/>
        <dbReference type="ChEBI" id="CHEBI:28"/>
        <dbReference type="ChEBI" id="CHEBI:15377"/>
        <dbReference type="ChEBI" id="CHEBI:33019"/>
        <dbReference type="ChEBI" id="CHEBI:58057"/>
        <dbReference type="EC" id="4.2.3.26"/>
    </reaction>
    <physiologicalReaction direction="left-to-right" evidence="3">
        <dbReference type="Rhea" id="RHEA:15810"/>
    </physiologicalReaction>
</comment>
<comment type="catalytic activity">
    <reaction evidence="3">
        <text>(2E)-geranyl diphosphate + H2O = (S)-linalool + diphosphate</text>
        <dbReference type="Rhea" id="RHEA:24116"/>
        <dbReference type="ChEBI" id="CHEBI:98"/>
        <dbReference type="ChEBI" id="CHEBI:15377"/>
        <dbReference type="ChEBI" id="CHEBI:33019"/>
        <dbReference type="ChEBI" id="CHEBI:58057"/>
        <dbReference type="EC" id="4.2.3.25"/>
    </reaction>
    <physiologicalReaction direction="left-to-right" evidence="3">
        <dbReference type="Rhea" id="RHEA:24117"/>
    </physiologicalReaction>
</comment>
<comment type="cofactor">
    <cofactor evidence="1">
        <name>Mg(2+)</name>
        <dbReference type="ChEBI" id="CHEBI:18420"/>
    </cofactor>
    <cofactor evidence="1">
        <name>Mn(2+)</name>
        <dbReference type="ChEBI" id="CHEBI:29035"/>
    </cofactor>
    <text evidence="1">Binds 3 Mg(2+) or Mn(2+) ions per subunit.</text>
</comment>
<comment type="pathway">
    <text evidence="3">Secondary metabolite biosynthesis; terpenoid biosynthesis.</text>
</comment>
<comment type="tissue specificity">
    <text evidence="3">Highly expressed in glandular trichomes.</text>
</comment>
<comment type="domain">
    <text evidence="2">The Asp-Asp-Xaa-Xaa-Asp/Glu (DDXXD/E) motif is important for the catalytic activity, presumably through binding to Mg(2+).</text>
</comment>
<comment type="similarity">
    <text evidence="5">Belongs to the terpene synthase family. Tpsb subfamily.</text>
</comment>
<keyword id="KW-0456">Lyase</keyword>
<keyword id="KW-0460">Magnesium</keyword>
<keyword id="KW-0479">Metal-binding</keyword>